<feature type="chain" id="PRO_0000256884" description="Chaperonin GroEL 2">
    <location>
        <begin position="1"/>
        <end position="546"/>
    </location>
</feature>
<feature type="region of interest" description="Disordered" evidence="2">
    <location>
        <begin position="526"/>
        <end position="546"/>
    </location>
</feature>
<feature type="compositionally biased region" description="Gly residues" evidence="2">
    <location>
        <begin position="534"/>
        <end position="546"/>
    </location>
</feature>
<feature type="binding site" evidence="1">
    <location>
        <begin position="30"/>
        <end position="33"/>
    </location>
    <ligand>
        <name>ATP</name>
        <dbReference type="ChEBI" id="CHEBI:30616"/>
    </ligand>
</feature>
<feature type="binding site" evidence="1">
    <location>
        <position position="51"/>
    </location>
    <ligand>
        <name>ATP</name>
        <dbReference type="ChEBI" id="CHEBI:30616"/>
    </ligand>
</feature>
<feature type="binding site" evidence="1">
    <location>
        <begin position="87"/>
        <end position="91"/>
    </location>
    <ligand>
        <name>ATP</name>
        <dbReference type="ChEBI" id="CHEBI:30616"/>
    </ligand>
</feature>
<feature type="binding site" evidence="1">
    <location>
        <position position="415"/>
    </location>
    <ligand>
        <name>ATP</name>
        <dbReference type="ChEBI" id="CHEBI:30616"/>
    </ligand>
</feature>
<feature type="binding site" evidence="1">
    <location>
        <begin position="479"/>
        <end position="481"/>
    </location>
    <ligand>
        <name>ATP</name>
        <dbReference type="ChEBI" id="CHEBI:30616"/>
    </ligand>
</feature>
<feature type="binding site" evidence="1">
    <location>
        <position position="495"/>
    </location>
    <ligand>
        <name>ATP</name>
        <dbReference type="ChEBI" id="CHEBI:30616"/>
    </ligand>
</feature>
<comment type="function">
    <text evidence="1">Together with its co-chaperonin GroES, plays an essential role in assisting protein folding. The GroEL-GroES system forms a nano-cage that allows encapsulation of the non-native substrate proteins and provides a physical environment optimized to promote and accelerate protein folding.</text>
</comment>
<comment type="catalytic activity">
    <reaction evidence="1">
        <text>ATP + H2O + a folded polypeptide = ADP + phosphate + an unfolded polypeptide.</text>
        <dbReference type="EC" id="5.6.1.7"/>
    </reaction>
</comment>
<comment type="subunit">
    <text evidence="1">Forms a cylinder of 14 subunits composed of two heptameric rings stacked back-to-back. Interacts with the co-chaperonin GroES.</text>
</comment>
<comment type="subcellular location">
    <subcellularLocation>
        <location evidence="1">Cytoplasm</location>
    </subcellularLocation>
</comment>
<comment type="similarity">
    <text evidence="1">Belongs to the chaperonin (HSP60) family.</text>
</comment>
<proteinExistence type="inferred from homology"/>
<dbReference type="EC" id="5.6.1.7" evidence="1"/>
<dbReference type="EMBL" id="CP000151">
    <property type="protein sequence ID" value="ABB07554.1"/>
    <property type="molecule type" value="Genomic_DNA"/>
</dbReference>
<dbReference type="SMR" id="Q39J12"/>
<dbReference type="GeneID" id="45093860"/>
<dbReference type="KEGG" id="bur:Bcep18194_A3955"/>
<dbReference type="PATRIC" id="fig|482957.22.peg.831"/>
<dbReference type="HOGENOM" id="CLU_016503_3_0_4"/>
<dbReference type="Proteomes" id="UP000002705">
    <property type="component" value="Chromosome 1"/>
</dbReference>
<dbReference type="GO" id="GO:0005737">
    <property type="term" value="C:cytoplasm"/>
    <property type="evidence" value="ECO:0007669"/>
    <property type="project" value="UniProtKB-SubCell"/>
</dbReference>
<dbReference type="GO" id="GO:0005524">
    <property type="term" value="F:ATP binding"/>
    <property type="evidence" value="ECO:0007669"/>
    <property type="project" value="UniProtKB-UniRule"/>
</dbReference>
<dbReference type="GO" id="GO:0140662">
    <property type="term" value="F:ATP-dependent protein folding chaperone"/>
    <property type="evidence" value="ECO:0007669"/>
    <property type="project" value="InterPro"/>
</dbReference>
<dbReference type="GO" id="GO:0016853">
    <property type="term" value="F:isomerase activity"/>
    <property type="evidence" value="ECO:0007669"/>
    <property type="project" value="UniProtKB-KW"/>
</dbReference>
<dbReference type="GO" id="GO:0051082">
    <property type="term" value="F:unfolded protein binding"/>
    <property type="evidence" value="ECO:0007669"/>
    <property type="project" value="UniProtKB-UniRule"/>
</dbReference>
<dbReference type="GO" id="GO:0042026">
    <property type="term" value="P:protein refolding"/>
    <property type="evidence" value="ECO:0007669"/>
    <property type="project" value="UniProtKB-UniRule"/>
</dbReference>
<dbReference type="CDD" id="cd03344">
    <property type="entry name" value="GroEL"/>
    <property type="match status" value="1"/>
</dbReference>
<dbReference type="FunFam" id="1.10.560.10:FF:000001">
    <property type="entry name" value="60 kDa chaperonin"/>
    <property type="match status" value="1"/>
</dbReference>
<dbReference type="FunFam" id="3.50.7.10:FF:000001">
    <property type="entry name" value="60 kDa chaperonin"/>
    <property type="match status" value="1"/>
</dbReference>
<dbReference type="Gene3D" id="3.50.7.10">
    <property type="entry name" value="GroEL"/>
    <property type="match status" value="1"/>
</dbReference>
<dbReference type="Gene3D" id="1.10.560.10">
    <property type="entry name" value="GroEL-like equatorial domain"/>
    <property type="match status" value="1"/>
</dbReference>
<dbReference type="Gene3D" id="3.30.260.10">
    <property type="entry name" value="TCP-1-like chaperonin intermediate domain"/>
    <property type="match status" value="1"/>
</dbReference>
<dbReference type="HAMAP" id="MF_00600">
    <property type="entry name" value="CH60"/>
    <property type="match status" value="1"/>
</dbReference>
<dbReference type="InterPro" id="IPR018370">
    <property type="entry name" value="Chaperonin_Cpn60_CS"/>
</dbReference>
<dbReference type="InterPro" id="IPR001844">
    <property type="entry name" value="Cpn60/GroEL"/>
</dbReference>
<dbReference type="InterPro" id="IPR002423">
    <property type="entry name" value="Cpn60/GroEL/TCP-1"/>
</dbReference>
<dbReference type="InterPro" id="IPR027409">
    <property type="entry name" value="GroEL-like_apical_dom_sf"/>
</dbReference>
<dbReference type="InterPro" id="IPR027413">
    <property type="entry name" value="GROEL-like_equatorial_sf"/>
</dbReference>
<dbReference type="InterPro" id="IPR027410">
    <property type="entry name" value="TCP-1-like_intermed_sf"/>
</dbReference>
<dbReference type="NCBIfam" id="TIGR02348">
    <property type="entry name" value="GroEL"/>
    <property type="match status" value="1"/>
</dbReference>
<dbReference type="NCBIfam" id="NF000592">
    <property type="entry name" value="PRK00013.1"/>
    <property type="match status" value="1"/>
</dbReference>
<dbReference type="NCBIfam" id="NF009487">
    <property type="entry name" value="PRK12849.1"/>
    <property type="match status" value="1"/>
</dbReference>
<dbReference type="NCBIfam" id="NF009488">
    <property type="entry name" value="PRK12850.1"/>
    <property type="match status" value="1"/>
</dbReference>
<dbReference type="NCBIfam" id="NF009489">
    <property type="entry name" value="PRK12851.1"/>
    <property type="match status" value="1"/>
</dbReference>
<dbReference type="PANTHER" id="PTHR45633">
    <property type="entry name" value="60 KDA HEAT SHOCK PROTEIN, MITOCHONDRIAL"/>
    <property type="match status" value="1"/>
</dbReference>
<dbReference type="Pfam" id="PF00118">
    <property type="entry name" value="Cpn60_TCP1"/>
    <property type="match status" value="1"/>
</dbReference>
<dbReference type="PRINTS" id="PR00298">
    <property type="entry name" value="CHAPERONIN60"/>
</dbReference>
<dbReference type="SUPFAM" id="SSF52029">
    <property type="entry name" value="GroEL apical domain-like"/>
    <property type="match status" value="1"/>
</dbReference>
<dbReference type="SUPFAM" id="SSF48592">
    <property type="entry name" value="GroEL equatorial domain-like"/>
    <property type="match status" value="1"/>
</dbReference>
<dbReference type="SUPFAM" id="SSF54849">
    <property type="entry name" value="GroEL-intermediate domain like"/>
    <property type="match status" value="1"/>
</dbReference>
<dbReference type="PROSITE" id="PS00296">
    <property type="entry name" value="CHAPERONINS_CPN60"/>
    <property type="match status" value="1"/>
</dbReference>
<gene>
    <name evidence="1" type="primary">groEL2</name>
    <name evidence="1" type="synonym">groL2</name>
    <name type="ordered locus">Bcep18194_A3955</name>
</gene>
<keyword id="KW-0067">ATP-binding</keyword>
<keyword id="KW-0143">Chaperone</keyword>
<keyword id="KW-0963">Cytoplasm</keyword>
<keyword id="KW-0413">Isomerase</keyword>
<keyword id="KW-0547">Nucleotide-binding</keyword>
<sequence length="546" mass="57064">MAAKDVVFGDSARSKMVEGVNILANAVKVTLGPKGRNVVLERSFGGPTVTKDGVSVAKEIELKDKLQNMGAQMVKEVASKTSDNAGDGTTTATVLAQSIVREGMKYVASGMNPMDLKRGIDKAVAAAVEELKKISKPCTTNKEIAQVGSISANSDTSIGDRIAEAMDKVGKEGVITVEDGKSLADELDVVEGMQFDRGYLSPYFINNPEKQVAVLDNPFVLLHDKKVSNIRDLLPVLEQVAKAGRPLLIIAEDIEGEALATLVVNNIRGILKTVAVKAPGFGDRRKAMLEDIAILTGGQVIAEETGLTLEKATLAELGQAKRIEVGKENTTIIDGAGEAVNIEARVKQVRAQIEEATSDYDREKLQERVAKLAGGVAVIKVGAATEVEMKEKKARVEDALHATRAAVEEGIVAGGGVALIRARTAIAALTGANADQNAGIKIVLRAMEEPLRQIVTNGGEEASVVVAAVAAGTGNYGYNAATGEYVDMVEAGVVDPTKVTRTALQNAASVAGLLLTTDAAVAELPKEDAPMPGGMPGGMGGMGMDM</sequence>
<organism>
    <name type="scientific">Burkholderia lata (strain ATCC 17760 / DSM 23089 / LMG 22485 / NCIMB 9086 / R18194 / 383)</name>
    <dbReference type="NCBI Taxonomy" id="482957"/>
    <lineage>
        <taxon>Bacteria</taxon>
        <taxon>Pseudomonadati</taxon>
        <taxon>Pseudomonadota</taxon>
        <taxon>Betaproteobacteria</taxon>
        <taxon>Burkholderiales</taxon>
        <taxon>Burkholderiaceae</taxon>
        <taxon>Burkholderia</taxon>
        <taxon>Burkholderia cepacia complex</taxon>
    </lineage>
</organism>
<protein>
    <recommendedName>
        <fullName evidence="1">Chaperonin GroEL 2</fullName>
        <ecNumber evidence="1">5.6.1.7</ecNumber>
    </recommendedName>
    <alternativeName>
        <fullName evidence="1">60 kDa chaperonin 2</fullName>
    </alternativeName>
    <alternativeName>
        <fullName evidence="1">Chaperonin-60 2</fullName>
        <shortName evidence="1">Cpn60 2</shortName>
    </alternativeName>
</protein>
<reference key="1">
    <citation type="submission" date="2005-10" db="EMBL/GenBank/DDBJ databases">
        <title>Complete sequence of chromosome 1 of Burkholderia sp. 383.</title>
        <authorList>
            <consortium name="US DOE Joint Genome Institute"/>
            <person name="Copeland A."/>
            <person name="Lucas S."/>
            <person name="Lapidus A."/>
            <person name="Barry K."/>
            <person name="Detter J.C."/>
            <person name="Glavina T."/>
            <person name="Hammon N."/>
            <person name="Israni S."/>
            <person name="Pitluck S."/>
            <person name="Chain P."/>
            <person name="Malfatti S."/>
            <person name="Shin M."/>
            <person name="Vergez L."/>
            <person name="Schmutz J."/>
            <person name="Larimer F."/>
            <person name="Land M."/>
            <person name="Kyrpides N."/>
            <person name="Lykidis A."/>
            <person name="Richardson P."/>
        </authorList>
    </citation>
    <scope>NUCLEOTIDE SEQUENCE [LARGE SCALE GENOMIC DNA]</scope>
    <source>
        <strain>ATCC 17760 / DSM 23089 / LMG 22485 / NCIMB 9086 / R18194 / 383</strain>
    </source>
</reference>
<name>CH602_BURL3</name>
<evidence type="ECO:0000255" key="1">
    <source>
        <dbReference type="HAMAP-Rule" id="MF_00600"/>
    </source>
</evidence>
<evidence type="ECO:0000256" key="2">
    <source>
        <dbReference type="SAM" id="MobiDB-lite"/>
    </source>
</evidence>
<accession>Q39J12</accession>